<organismHost>
    <name type="scientific">Ornithodoros</name>
    <name type="common">relapsing fever ticks</name>
    <dbReference type="NCBI Taxonomy" id="6937"/>
</organismHost>
<organismHost>
    <name type="scientific">Phacochoerus aethiopicus</name>
    <name type="common">Warthog</name>
    <dbReference type="NCBI Taxonomy" id="85517"/>
</organismHost>
<organismHost>
    <name type="scientific">Phacochoerus africanus</name>
    <name type="common">Warthog</name>
    <dbReference type="NCBI Taxonomy" id="41426"/>
</organismHost>
<organismHost>
    <name type="scientific">Potamochoerus larvatus</name>
    <name type="common">Bushpig</name>
    <dbReference type="NCBI Taxonomy" id="273792"/>
</organismHost>
<organismHost>
    <name type="scientific">Sus scrofa</name>
    <name type="common">Pig</name>
    <dbReference type="NCBI Taxonomy" id="9823"/>
</organismHost>
<accession>P0CAK0</accession>
<evidence type="ECO:0000250" key="1">
    <source>
        <dbReference type="UniProtKB" id="P27946"/>
    </source>
</evidence>
<evidence type="ECO:0000305" key="2"/>
<comment type="subcellular location">
    <subcellularLocation>
        <location evidence="1">Virion</location>
    </subcellularLocation>
</comment>
<comment type="induction">
    <text evidence="2">Expressed in the early phase of the viral replicative cycle.</text>
</comment>
<comment type="similarity">
    <text evidence="2">Belongs to the asfivirus I73R family.</text>
</comment>
<proteinExistence type="inferred from homology"/>
<keyword id="KW-0946">Virion</keyword>
<reference key="1">
    <citation type="submission" date="2003-03" db="EMBL/GenBank/DDBJ databases">
        <title>African swine fever virus genomes.</title>
        <authorList>
            <person name="Kutish G.F."/>
            <person name="Rock D.L."/>
        </authorList>
    </citation>
    <scope>NUCLEOTIDE SEQUENCE [LARGE SCALE GENOMIC DNA]</scope>
</reference>
<feature type="chain" id="PRO_0000373726" description="Uncharacterized protein I73R">
    <location>
        <begin position="1"/>
        <end position="72"/>
    </location>
</feature>
<gene>
    <name type="ordered locus">Mal-148</name>
</gene>
<sequence length="72" mass="8386">METQKLVSMISEALEKYQYPLSAKNIKAVIQKEHNVILPVGSINSILYSYTELFEKIDKTNTIYPPLWIRKN</sequence>
<dbReference type="EMBL" id="AY261361">
    <property type="status" value="NOT_ANNOTATED_CDS"/>
    <property type="molecule type" value="Genomic_DNA"/>
</dbReference>
<dbReference type="SMR" id="P0CAK0"/>
<dbReference type="Proteomes" id="UP000000860">
    <property type="component" value="Segment"/>
</dbReference>
<dbReference type="GO" id="GO:0044423">
    <property type="term" value="C:virion component"/>
    <property type="evidence" value="ECO:0007669"/>
    <property type="project" value="UniProtKB-KW"/>
</dbReference>
<name>VF73R_ASFM2</name>
<protein>
    <recommendedName>
        <fullName>Uncharacterized protein I73R</fullName>
    </recommendedName>
</protein>
<organism>
    <name type="scientific">African swine fever virus (isolate Tick/Malawi/Lil 20-1/1983)</name>
    <name type="common">ASFV</name>
    <dbReference type="NCBI Taxonomy" id="10500"/>
    <lineage>
        <taxon>Viruses</taxon>
        <taxon>Varidnaviria</taxon>
        <taxon>Bamfordvirae</taxon>
        <taxon>Nucleocytoviricota</taxon>
        <taxon>Pokkesviricetes</taxon>
        <taxon>Asfuvirales</taxon>
        <taxon>Asfarviridae</taxon>
        <taxon>Asfivirus</taxon>
        <taxon>African swine fever virus</taxon>
    </lineage>
</organism>